<dbReference type="EC" id="4.1.99.22" evidence="1"/>
<dbReference type="EMBL" id="AE006470">
    <property type="protein sequence ID" value="AAM72562.1"/>
    <property type="molecule type" value="Genomic_DNA"/>
</dbReference>
<dbReference type="RefSeq" id="NP_662220.1">
    <property type="nucleotide sequence ID" value="NC_002932.3"/>
</dbReference>
<dbReference type="RefSeq" id="WP_010933001.1">
    <property type="nucleotide sequence ID" value="NC_002932.3"/>
</dbReference>
<dbReference type="SMR" id="P59038"/>
<dbReference type="STRING" id="194439.CT1333"/>
<dbReference type="EnsemblBacteria" id="AAM72562">
    <property type="protein sequence ID" value="AAM72562"/>
    <property type="gene ID" value="CT1333"/>
</dbReference>
<dbReference type="KEGG" id="cte:CT1333"/>
<dbReference type="PATRIC" id="fig|194439.7.peg.1213"/>
<dbReference type="eggNOG" id="COG2896">
    <property type="taxonomic scope" value="Bacteria"/>
</dbReference>
<dbReference type="HOGENOM" id="CLU_009273_0_1_10"/>
<dbReference type="OrthoDB" id="9763993at2"/>
<dbReference type="UniPathway" id="UPA00344"/>
<dbReference type="Proteomes" id="UP000001007">
    <property type="component" value="Chromosome"/>
</dbReference>
<dbReference type="GO" id="GO:0051539">
    <property type="term" value="F:4 iron, 4 sulfur cluster binding"/>
    <property type="evidence" value="ECO:0007669"/>
    <property type="project" value="UniProtKB-UniRule"/>
</dbReference>
<dbReference type="GO" id="GO:0061799">
    <property type="term" value="F:cyclic pyranopterin monophosphate synthase activity"/>
    <property type="evidence" value="ECO:0007669"/>
    <property type="project" value="TreeGrafter"/>
</dbReference>
<dbReference type="GO" id="GO:0061798">
    <property type="term" value="F:GTP 3',8'-cyclase activity"/>
    <property type="evidence" value="ECO:0007669"/>
    <property type="project" value="UniProtKB-UniRule"/>
</dbReference>
<dbReference type="GO" id="GO:0005525">
    <property type="term" value="F:GTP binding"/>
    <property type="evidence" value="ECO:0007669"/>
    <property type="project" value="UniProtKB-UniRule"/>
</dbReference>
<dbReference type="GO" id="GO:0046872">
    <property type="term" value="F:metal ion binding"/>
    <property type="evidence" value="ECO:0007669"/>
    <property type="project" value="UniProtKB-KW"/>
</dbReference>
<dbReference type="GO" id="GO:1904047">
    <property type="term" value="F:S-adenosyl-L-methionine binding"/>
    <property type="evidence" value="ECO:0007669"/>
    <property type="project" value="UniProtKB-UniRule"/>
</dbReference>
<dbReference type="GO" id="GO:0006777">
    <property type="term" value="P:Mo-molybdopterin cofactor biosynthetic process"/>
    <property type="evidence" value="ECO:0007669"/>
    <property type="project" value="UniProtKB-UniRule"/>
</dbReference>
<dbReference type="CDD" id="cd01335">
    <property type="entry name" value="Radical_SAM"/>
    <property type="match status" value="1"/>
</dbReference>
<dbReference type="CDD" id="cd21117">
    <property type="entry name" value="Twitch_MoaA"/>
    <property type="match status" value="1"/>
</dbReference>
<dbReference type="Gene3D" id="3.20.20.70">
    <property type="entry name" value="Aldolase class I"/>
    <property type="match status" value="1"/>
</dbReference>
<dbReference type="HAMAP" id="MF_01225_B">
    <property type="entry name" value="MoaA_B"/>
    <property type="match status" value="1"/>
</dbReference>
<dbReference type="InterPro" id="IPR013785">
    <property type="entry name" value="Aldolase_TIM"/>
</dbReference>
<dbReference type="InterPro" id="IPR006638">
    <property type="entry name" value="Elp3/MiaA/NifB-like_rSAM"/>
</dbReference>
<dbReference type="InterPro" id="IPR013483">
    <property type="entry name" value="MoaA"/>
</dbReference>
<dbReference type="InterPro" id="IPR000385">
    <property type="entry name" value="MoaA_NifB_PqqE_Fe-S-bd_CS"/>
</dbReference>
<dbReference type="InterPro" id="IPR010505">
    <property type="entry name" value="MoaA_twitch"/>
</dbReference>
<dbReference type="InterPro" id="IPR050105">
    <property type="entry name" value="MoCo_biosynth_MoaA/MoaC"/>
</dbReference>
<dbReference type="InterPro" id="IPR007197">
    <property type="entry name" value="rSAM"/>
</dbReference>
<dbReference type="NCBIfam" id="TIGR02666">
    <property type="entry name" value="moaA"/>
    <property type="match status" value="1"/>
</dbReference>
<dbReference type="PANTHER" id="PTHR22960:SF0">
    <property type="entry name" value="MOLYBDENUM COFACTOR BIOSYNTHESIS PROTEIN 1"/>
    <property type="match status" value="1"/>
</dbReference>
<dbReference type="PANTHER" id="PTHR22960">
    <property type="entry name" value="MOLYBDOPTERIN COFACTOR SYNTHESIS PROTEIN A"/>
    <property type="match status" value="1"/>
</dbReference>
<dbReference type="Pfam" id="PF13353">
    <property type="entry name" value="Fer4_12"/>
    <property type="match status" value="1"/>
</dbReference>
<dbReference type="Pfam" id="PF06463">
    <property type="entry name" value="Mob_synth_C"/>
    <property type="match status" value="1"/>
</dbReference>
<dbReference type="Pfam" id="PF04055">
    <property type="entry name" value="Radical_SAM"/>
    <property type="match status" value="1"/>
</dbReference>
<dbReference type="SFLD" id="SFLDG01383">
    <property type="entry name" value="cyclic_pyranopterin_phosphate"/>
    <property type="match status" value="1"/>
</dbReference>
<dbReference type="SFLD" id="SFLDG01072">
    <property type="entry name" value="dehydrogenase_like"/>
    <property type="match status" value="1"/>
</dbReference>
<dbReference type="SMART" id="SM00729">
    <property type="entry name" value="Elp3"/>
    <property type="match status" value="1"/>
</dbReference>
<dbReference type="SUPFAM" id="SSF102114">
    <property type="entry name" value="Radical SAM enzymes"/>
    <property type="match status" value="1"/>
</dbReference>
<dbReference type="PROSITE" id="PS01305">
    <property type="entry name" value="MOAA_NIFB_PQQE"/>
    <property type="match status" value="1"/>
</dbReference>
<dbReference type="PROSITE" id="PS51918">
    <property type="entry name" value="RADICAL_SAM"/>
    <property type="match status" value="1"/>
</dbReference>
<keyword id="KW-0004">4Fe-4S</keyword>
<keyword id="KW-0342">GTP-binding</keyword>
<keyword id="KW-0408">Iron</keyword>
<keyword id="KW-0411">Iron-sulfur</keyword>
<keyword id="KW-0456">Lyase</keyword>
<keyword id="KW-0479">Metal-binding</keyword>
<keyword id="KW-0501">Molybdenum cofactor biosynthesis</keyword>
<keyword id="KW-0547">Nucleotide-binding</keyword>
<keyword id="KW-1185">Reference proteome</keyword>
<keyword id="KW-0949">S-adenosyl-L-methionine</keyword>
<evidence type="ECO:0000255" key="1">
    <source>
        <dbReference type="HAMAP-Rule" id="MF_01225"/>
    </source>
</evidence>
<evidence type="ECO:0000255" key="2">
    <source>
        <dbReference type="PROSITE-ProRule" id="PRU01266"/>
    </source>
</evidence>
<evidence type="ECO:0000256" key="3">
    <source>
        <dbReference type="SAM" id="MobiDB-lite"/>
    </source>
</evidence>
<gene>
    <name evidence="1" type="primary">moaA</name>
    <name type="ordered locus">CT1333</name>
</gene>
<accession>P59038</accession>
<reference key="1">
    <citation type="journal article" date="2002" name="Proc. Natl. Acad. Sci. U.S.A.">
        <title>The complete genome sequence of Chlorobium tepidum TLS, a photosynthetic, anaerobic, green-sulfur bacterium.</title>
        <authorList>
            <person name="Eisen J.A."/>
            <person name="Nelson K.E."/>
            <person name="Paulsen I.T."/>
            <person name="Heidelberg J.F."/>
            <person name="Wu M."/>
            <person name="Dodson R.J."/>
            <person name="DeBoy R.T."/>
            <person name="Gwinn M.L."/>
            <person name="Nelson W.C."/>
            <person name="Haft D.H."/>
            <person name="Hickey E.K."/>
            <person name="Peterson J.D."/>
            <person name="Durkin A.S."/>
            <person name="Kolonay J.F."/>
            <person name="Yang F."/>
            <person name="Holt I.E."/>
            <person name="Umayam L.A."/>
            <person name="Mason T.M."/>
            <person name="Brenner M."/>
            <person name="Shea T.P."/>
            <person name="Parksey D.S."/>
            <person name="Nierman W.C."/>
            <person name="Feldblyum T.V."/>
            <person name="Hansen C.L."/>
            <person name="Craven M.B."/>
            <person name="Radune D."/>
            <person name="Vamathevan J.J."/>
            <person name="Khouri H.M."/>
            <person name="White O."/>
            <person name="Gruber T.M."/>
            <person name="Ketchum K.A."/>
            <person name="Venter J.C."/>
            <person name="Tettelin H."/>
            <person name="Bryant D.A."/>
            <person name="Fraser C.M."/>
        </authorList>
    </citation>
    <scope>NUCLEOTIDE SEQUENCE [LARGE SCALE GENOMIC DNA]</scope>
    <source>
        <strain>ATCC 49652 / DSM 12025 / NBRC 103806 / TLS</strain>
    </source>
</reference>
<organism>
    <name type="scientific">Chlorobaculum tepidum (strain ATCC 49652 / DSM 12025 / NBRC 103806 / TLS)</name>
    <name type="common">Chlorobium tepidum</name>
    <dbReference type="NCBI Taxonomy" id="194439"/>
    <lineage>
        <taxon>Bacteria</taxon>
        <taxon>Pseudomonadati</taxon>
        <taxon>Chlorobiota</taxon>
        <taxon>Chlorobiia</taxon>
        <taxon>Chlorobiales</taxon>
        <taxon>Chlorobiaceae</taxon>
        <taxon>Chlorobaculum</taxon>
    </lineage>
</organism>
<proteinExistence type="inferred from homology"/>
<protein>
    <recommendedName>
        <fullName evidence="1">GTP 3',8-cyclase</fullName>
        <ecNumber evidence="1">4.1.99.22</ecNumber>
    </recommendedName>
    <alternativeName>
        <fullName evidence="1">Molybdenum cofactor biosynthesis protein A</fullName>
    </alternativeName>
</protein>
<name>MOAA_CHLTE</name>
<sequence length="330" mass="36759">MNRESAKQLVLTDRFGRTVDYVRIAVTSACNLRCTYCLKEDAPTQTQQLDVVETSKLIALLAGMGVRKIRFTGGEPLLHPSIPELVRIAKATPGIDTVCITTNGVLLDRQLDALVEAGLDGVNLSLDTLDREKFTSITRRDRFEQVSKALDRLLATPSLTVKLNTLMLRGINNDEIPAFVELTREHDLTVRFMELQPFDDHQIWRTGRFMGAERIRERLADAYPELEAITGHSTEHYSFSLPGHRGSIAIIPAFSRNFCSSCSKLRITADARLISCLYHHESIDLAPALKGEMNEVELKKRIIEAVQQKPKDGLKSSHDTAASSMSQIGG</sequence>
<comment type="function">
    <text evidence="1">Catalyzes the cyclization of GTP to (8S)-3',8-cyclo-7,8-dihydroguanosine 5'-triphosphate.</text>
</comment>
<comment type="catalytic activity">
    <reaction evidence="1">
        <text>GTP + AH2 + S-adenosyl-L-methionine = (8S)-3',8-cyclo-7,8-dihydroguanosine 5'-triphosphate + 5'-deoxyadenosine + L-methionine + A + H(+)</text>
        <dbReference type="Rhea" id="RHEA:49576"/>
        <dbReference type="ChEBI" id="CHEBI:13193"/>
        <dbReference type="ChEBI" id="CHEBI:15378"/>
        <dbReference type="ChEBI" id="CHEBI:17319"/>
        <dbReference type="ChEBI" id="CHEBI:17499"/>
        <dbReference type="ChEBI" id="CHEBI:37565"/>
        <dbReference type="ChEBI" id="CHEBI:57844"/>
        <dbReference type="ChEBI" id="CHEBI:59789"/>
        <dbReference type="ChEBI" id="CHEBI:131766"/>
        <dbReference type="EC" id="4.1.99.22"/>
    </reaction>
</comment>
<comment type="cofactor">
    <cofactor evidence="1">
        <name>[4Fe-4S] cluster</name>
        <dbReference type="ChEBI" id="CHEBI:49883"/>
    </cofactor>
    <text evidence="1">Binds 2 [4Fe-4S] clusters. Binds 1 [4Fe-4S] cluster coordinated with 3 cysteines and an exchangeable S-adenosyl-L-methionine and 1 [4Fe-4S] cluster coordinated with 3 cysteines and the GTP-derived substrate.</text>
</comment>
<comment type="pathway">
    <text evidence="1">Cofactor biosynthesis; molybdopterin biosynthesis.</text>
</comment>
<comment type="subunit">
    <text evidence="1">Monomer and homodimer.</text>
</comment>
<comment type="similarity">
    <text evidence="1">Belongs to the radical SAM superfamily. MoaA family.</text>
</comment>
<feature type="chain" id="PRO_0000152954" description="GTP 3',8-cyclase">
    <location>
        <begin position="1"/>
        <end position="330"/>
    </location>
</feature>
<feature type="domain" description="Radical SAM core" evidence="2">
    <location>
        <begin position="14"/>
        <end position="225"/>
    </location>
</feature>
<feature type="region of interest" description="Disordered" evidence="3">
    <location>
        <begin position="309"/>
        <end position="330"/>
    </location>
</feature>
<feature type="compositionally biased region" description="Basic and acidic residues" evidence="3">
    <location>
        <begin position="309"/>
        <end position="318"/>
    </location>
</feature>
<feature type="compositionally biased region" description="Polar residues" evidence="3">
    <location>
        <begin position="319"/>
        <end position="330"/>
    </location>
</feature>
<feature type="binding site" evidence="1">
    <location>
        <position position="23"/>
    </location>
    <ligand>
        <name>GTP</name>
        <dbReference type="ChEBI" id="CHEBI:37565"/>
    </ligand>
</feature>
<feature type="binding site" evidence="1">
    <location>
        <position position="30"/>
    </location>
    <ligand>
        <name>[4Fe-4S] cluster</name>
        <dbReference type="ChEBI" id="CHEBI:49883"/>
        <label>1</label>
        <note>4Fe-4S-S-AdoMet</note>
    </ligand>
</feature>
<feature type="binding site" evidence="1">
    <location>
        <position position="34"/>
    </location>
    <ligand>
        <name>[4Fe-4S] cluster</name>
        <dbReference type="ChEBI" id="CHEBI:49883"/>
        <label>1</label>
        <note>4Fe-4S-S-AdoMet</note>
    </ligand>
</feature>
<feature type="binding site" evidence="1">
    <location>
        <position position="36"/>
    </location>
    <ligand>
        <name>S-adenosyl-L-methionine</name>
        <dbReference type="ChEBI" id="CHEBI:59789"/>
    </ligand>
</feature>
<feature type="binding site" evidence="1">
    <location>
        <position position="37"/>
    </location>
    <ligand>
        <name>[4Fe-4S] cluster</name>
        <dbReference type="ChEBI" id="CHEBI:49883"/>
        <label>1</label>
        <note>4Fe-4S-S-AdoMet</note>
    </ligand>
</feature>
<feature type="binding site" evidence="1">
    <location>
        <position position="70"/>
    </location>
    <ligand>
        <name>GTP</name>
        <dbReference type="ChEBI" id="CHEBI:37565"/>
    </ligand>
</feature>
<feature type="binding site" evidence="1">
    <location>
        <position position="74"/>
    </location>
    <ligand>
        <name>S-adenosyl-L-methionine</name>
        <dbReference type="ChEBI" id="CHEBI:59789"/>
    </ligand>
</feature>
<feature type="binding site" evidence="1">
    <location>
        <position position="101"/>
    </location>
    <ligand>
        <name>GTP</name>
        <dbReference type="ChEBI" id="CHEBI:37565"/>
    </ligand>
</feature>
<feature type="binding site" evidence="1">
    <location>
        <position position="125"/>
    </location>
    <ligand>
        <name>S-adenosyl-L-methionine</name>
        <dbReference type="ChEBI" id="CHEBI:59789"/>
    </ligand>
</feature>
<feature type="binding site" evidence="1">
    <location>
        <position position="162"/>
    </location>
    <ligand>
        <name>GTP</name>
        <dbReference type="ChEBI" id="CHEBI:37565"/>
    </ligand>
</feature>
<feature type="binding site" evidence="1">
    <location>
        <position position="259"/>
    </location>
    <ligand>
        <name>[4Fe-4S] cluster</name>
        <dbReference type="ChEBI" id="CHEBI:49883"/>
        <label>2</label>
        <note>4Fe-4S-substrate</note>
    </ligand>
</feature>
<feature type="binding site" evidence="1">
    <location>
        <position position="262"/>
    </location>
    <ligand>
        <name>[4Fe-4S] cluster</name>
        <dbReference type="ChEBI" id="CHEBI:49883"/>
        <label>2</label>
        <note>4Fe-4S-substrate</note>
    </ligand>
</feature>
<feature type="binding site" evidence="1">
    <location>
        <begin position="264"/>
        <end position="266"/>
    </location>
    <ligand>
        <name>GTP</name>
        <dbReference type="ChEBI" id="CHEBI:37565"/>
    </ligand>
</feature>
<feature type="binding site" evidence="1">
    <location>
        <position position="276"/>
    </location>
    <ligand>
        <name>[4Fe-4S] cluster</name>
        <dbReference type="ChEBI" id="CHEBI:49883"/>
        <label>2</label>
        <note>4Fe-4S-substrate</note>
    </ligand>
</feature>